<protein>
    <recommendedName>
        <fullName evidence="1">Methionyl-tRNA formyltransferase</fullName>
        <ecNumber evidence="1">2.1.2.9</ecNumber>
    </recommendedName>
</protein>
<comment type="function">
    <text evidence="1">Attaches a formyl group to the free amino group of methionyl-tRNA(fMet). The formyl group appears to play a dual role in the initiator identity of N-formylmethionyl-tRNA by promoting its recognition by IF2 and preventing the misappropriation of this tRNA by the elongation apparatus.</text>
</comment>
<comment type="catalytic activity">
    <reaction evidence="1">
        <text>L-methionyl-tRNA(fMet) + (6R)-10-formyltetrahydrofolate = N-formyl-L-methionyl-tRNA(fMet) + (6S)-5,6,7,8-tetrahydrofolate + H(+)</text>
        <dbReference type="Rhea" id="RHEA:24380"/>
        <dbReference type="Rhea" id="RHEA-COMP:9952"/>
        <dbReference type="Rhea" id="RHEA-COMP:9953"/>
        <dbReference type="ChEBI" id="CHEBI:15378"/>
        <dbReference type="ChEBI" id="CHEBI:57453"/>
        <dbReference type="ChEBI" id="CHEBI:78530"/>
        <dbReference type="ChEBI" id="CHEBI:78844"/>
        <dbReference type="ChEBI" id="CHEBI:195366"/>
        <dbReference type="EC" id="2.1.2.9"/>
    </reaction>
</comment>
<comment type="similarity">
    <text evidence="1">Belongs to the Fmt family.</text>
</comment>
<feature type="chain" id="PRO_0000083088" description="Methionyl-tRNA formyltransferase">
    <location>
        <begin position="1"/>
        <end position="307"/>
    </location>
</feature>
<feature type="binding site" evidence="1">
    <location>
        <begin position="108"/>
        <end position="111"/>
    </location>
    <ligand>
        <name>(6S)-5,6,7,8-tetrahydrofolate</name>
        <dbReference type="ChEBI" id="CHEBI:57453"/>
    </ligand>
</feature>
<proteinExistence type="inferred from homology"/>
<dbReference type="EC" id="2.1.2.9" evidence="1"/>
<dbReference type="EMBL" id="AE008923">
    <property type="protein sequence ID" value="AAM38642.1"/>
    <property type="molecule type" value="Genomic_DNA"/>
</dbReference>
<dbReference type="RefSeq" id="WP_005921922.1">
    <property type="nucleotide sequence ID" value="NC_003919.1"/>
</dbReference>
<dbReference type="SMR" id="Q8PG21"/>
<dbReference type="GeneID" id="66912821"/>
<dbReference type="KEGG" id="xac:XAC3800"/>
<dbReference type="eggNOG" id="COG0223">
    <property type="taxonomic scope" value="Bacteria"/>
</dbReference>
<dbReference type="HOGENOM" id="CLU_033347_1_2_6"/>
<dbReference type="Proteomes" id="UP000000576">
    <property type="component" value="Chromosome"/>
</dbReference>
<dbReference type="GO" id="GO:0005829">
    <property type="term" value="C:cytosol"/>
    <property type="evidence" value="ECO:0007669"/>
    <property type="project" value="TreeGrafter"/>
</dbReference>
<dbReference type="GO" id="GO:0004479">
    <property type="term" value="F:methionyl-tRNA formyltransferase activity"/>
    <property type="evidence" value="ECO:0007669"/>
    <property type="project" value="UniProtKB-UniRule"/>
</dbReference>
<dbReference type="CDD" id="cd08646">
    <property type="entry name" value="FMT_core_Met-tRNA-FMT_N"/>
    <property type="match status" value="1"/>
</dbReference>
<dbReference type="CDD" id="cd08704">
    <property type="entry name" value="Met_tRNA_FMT_C"/>
    <property type="match status" value="1"/>
</dbReference>
<dbReference type="FunFam" id="3.40.50.12230:FF:000001">
    <property type="entry name" value="Methionyl-tRNA formyltransferase"/>
    <property type="match status" value="1"/>
</dbReference>
<dbReference type="FunFam" id="3.40.50.170:FF:000003">
    <property type="entry name" value="Methionyl-tRNA formyltransferase"/>
    <property type="match status" value="1"/>
</dbReference>
<dbReference type="Gene3D" id="3.10.25.10">
    <property type="entry name" value="Formyl transferase, C-terminal domain"/>
    <property type="match status" value="1"/>
</dbReference>
<dbReference type="Gene3D" id="3.40.50.170">
    <property type="entry name" value="Formyl transferase, N-terminal domain"/>
    <property type="match status" value="1"/>
</dbReference>
<dbReference type="HAMAP" id="MF_00182">
    <property type="entry name" value="Formyl_trans"/>
    <property type="match status" value="1"/>
</dbReference>
<dbReference type="InterPro" id="IPR005794">
    <property type="entry name" value="Fmt"/>
</dbReference>
<dbReference type="InterPro" id="IPR005793">
    <property type="entry name" value="Formyl_trans_C"/>
</dbReference>
<dbReference type="InterPro" id="IPR037022">
    <property type="entry name" value="Formyl_trans_C_sf"/>
</dbReference>
<dbReference type="InterPro" id="IPR002376">
    <property type="entry name" value="Formyl_transf_N"/>
</dbReference>
<dbReference type="InterPro" id="IPR036477">
    <property type="entry name" value="Formyl_transf_N_sf"/>
</dbReference>
<dbReference type="InterPro" id="IPR011034">
    <property type="entry name" value="Formyl_transferase-like_C_sf"/>
</dbReference>
<dbReference type="InterPro" id="IPR001555">
    <property type="entry name" value="GART_AS"/>
</dbReference>
<dbReference type="InterPro" id="IPR044135">
    <property type="entry name" value="Met-tRNA-FMT_C"/>
</dbReference>
<dbReference type="InterPro" id="IPR041711">
    <property type="entry name" value="Met-tRNA-FMT_N"/>
</dbReference>
<dbReference type="NCBIfam" id="TIGR00460">
    <property type="entry name" value="fmt"/>
    <property type="match status" value="1"/>
</dbReference>
<dbReference type="PANTHER" id="PTHR11138">
    <property type="entry name" value="METHIONYL-TRNA FORMYLTRANSFERASE"/>
    <property type="match status" value="1"/>
</dbReference>
<dbReference type="PANTHER" id="PTHR11138:SF5">
    <property type="entry name" value="METHIONYL-TRNA FORMYLTRANSFERASE, MITOCHONDRIAL"/>
    <property type="match status" value="1"/>
</dbReference>
<dbReference type="Pfam" id="PF02911">
    <property type="entry name" value="Formyl_trans_C"/>
    <property type="match status" value="1"/>
</dbReference>
<dbReference type="Pfam" id="PF00551">
    <property type="entry name" value="Formyl_trans_N"/>
    <property type="match status" value="1"/>
</dbReference>
<dbReference type="SUPFAM" id="SSF50486">
    <property type="entry name" value="FMT C-terminal domain-like"/>
    <property type="match status" value="1"/>
</dbReference>
<dbReference type="SUPFAM" id="SSF53328">
    <property type="entry name" value="Formyltransferase"/>
    <property type="match status" value="1"/>
</dbReference>
<dbReference type="PROSITE" id="PS00373">
    <property type="entry name" value="GART"/>
    <property type="match status" value="1"/>
</dbReference>
<keyword id="KW-0648">Protein biosynthesis</keyword>
<keyword id="KW-0808">Transferase</keyword>
<name>FMT_XANAC</name>
<accession>Q8PG21</accession>
<sequence>MRIIFAGTPDFAVPSLRAAAQRHEVVAVYTQPDRPAGRGRGLTPSPVKLEAIARGIPVFQPQTLRSPEALATLRALDADLMVVVAYGLILPKAVLAAPTHGCWNVHASLLPRWRGAAPIQRAIEAGDTETGVCLMQMEAGLDTGPVLLSQRIEIGEQDTGGQLHDRLAALGAQVLSDGLGLLRAGIRPVAQPQPADGVTYAHKLDKAQARLDWAQPAQELARRVRAFNPWPVAEAILAGERVRLHGAVALELAHQQPPGTLLAASKQGIDIACGEGALRVRVLQREGGKAITAADYLNARRDLPALR</sequence>
<reference key="1">
    <citation type="journal article" date="2002" name="Nature">
        <title>Comparison of the genomes of two Xanthomonas pathogens with differing host specificities.</title>
        <authorList>
            <person name="da Silva A.C.R."/>
            <person name="Ferro J.A."/>
            <person name="Reinach F.C."/>
            <person name="Farah C.S."/>
            <person name="Furlan L.R."/>
            <person name="Quaggio R.B."/>
            <person name="Monteiro-Vitorello C.B."/>
            <person name="Van Sluys M.A."/>
            <person name="Almeida N.F. Jr."/>
            <person name="Alves L.M.C."/>
            <person name="do Amaral A.M."/>
            <person name="Bertolini M.C."/>
            <person name="Camargo L.E.A."/>
            <person name="Camarotte G."/>
            <person name="Cannavan F."/>
            <person name="Cardozo J."/>
            <person name="Chambergo F."/>
            <person name="Ciapina L.P."/>
            <person name="Cicarelli R.M.B."/>
            <person name="Coutinho L.L."/>
            <person name="Cursino-Santos J.R."/>
            <person name="El-Dorry H."/>
            <person name="Faria J.B."/>
            <person name="Ferreira A.J.S."/>
            <person name="Ferreira R.C.C."/>
            <person name="Ferro M.I.T."/>
            <person name="Formighieri E.F."/>
            <person name="Franco M.C."/>
            <person name="Greggio C.C."/>
            <person name="Gruber A."/>
            <person name="Katsuyama A.M."/>
            <person name="Kishi L.T."/>
            <person name="Leite R.P."/>
            <person name="Lemos E.G.M."/>
            <person name="Lemos M.V.F."/>
            <person name="Locali E.C."/>
            <person name="Machado M.A."/>
            <person name="Madeira A.M.B.N."/>
            <person name="Martinez-Rossi N.M."/>
            <person name="Martins E.C."/>
            <person name="Meidanis J."/>
            <person name="Menck C.F.M."/>
            <person name="Miyaki C.Y."/>
            <person name="Moon D.H."/>
            <person name="Moreira L.M."/>
            <person name="Novo M.T.M."/>
            <person name="Okura V.K."/>
            <person name="Oliveira M.C."/>
            <person name="Oliveira V.R."/>
            <person name="Pereira H.A."/>
            <person name="Rossi A."/>
            <person name="Sena J.A.D."/>
            <person name="Silva C."/>
            <person name="de Souza R.F."/>
            <person name="Spinola L.A.F."/>
            <person name="Takita M.A."/>
            <person name="Tamura R.E."/>
            <person name="Teixeira E.C."/>
            <person name="Tezza R.I.D."/>
            <person name="Trindade dos Santos M."/>
            <person name="Truffi D."/>
            <person name="Tsai S.M."/>
            <person name="White F.F."/>
            <person name="Setubal J.C."/>
            <person name="Kitajima J.P."/>
        </authorList>
    </citation>
    <scope>NUCLEOTIDE SEQUENCE [LARGE SCALE GENOMIC DNA]</scope>
    <source>
        <strain>306</strain>
    </source>
</reference>
<evidence type="ECO:0000255" key="1">
    <source>
        <dbReference type="HAMAP-Rule" id="MF_00182"/>
    </source>
</evidence>
<gene>
    <name evidence="1" type="primary">fmt</name>
    <name type="ordered locus">XAC3800</name>
</gene>
<organism>
    <name type="scientific">Xanthomonas axonopodis pv. citri (strain 306)</name>
    <dbReference type="NCBI Taxonomy" id="190486"/>
    <lineage>
        <taxon>Bacteria</taxon>
        <taxon>Pseudomonadati</taxon>
        <taxon>Pseudomonadota</taxon>
        <taxon>Gammaproteobacteria</taxon>
        <taxon>Lysobacterales</taxon>
        <taxon>Lysobacteraceae</taxon>
        <taxon>Xanthomonas</taxon>
    </lineage>
</organism>